<keyword id="KW-0067">ATP-binding</keyword>
<keyword id="KW-1048">Host nucleus</keyword>
<keyword id="KW-0418">Kinase</keyword>
<keyword id="KW-0547">Nucleotide-binding</keyword>
<keyword id="KW-1185">Reference proteome</keyword>
<keyword id="KW-0723">Serine/threonine-protein kinase</keyword>
<keyword id="KW-0808">Transferase</keyword>
<keyword id="KW-0946">Virion</keyword>
<keyword id="KW-0920">Virion tegument</keyword>
<name>UL13_PSHV1</name>
<organismHost>
    <name type="scientific">Amazona oratrix</name>
    <name type="common">yellow-headed parrot</name>
    <dbReference type="NCBI Taxonomy" id="152276"/>
</organismHost>
<dbReference type="EC" id="2.7.11.1"/>
<dbReference type="EMBL" id="AY372243">
    <property type="protein sequence ID" value="AAQ73733.1"/>
    <property type="molecule type" value="Genomic_DNA"/>
</dbReference>
<dbReference type="RefSeq" id="NP_944427.1">
    <property type="nucleotide sequence ID" value="NC_005264.1"/>
</dbReference>
<dbReference type="GeneID" id="2657010"/>
<dbReference type="KEGG" id="vg:2657010"/>
<dbReference type="Proteomes" id="UP000006840">
    <property type="component" value="Segment"/>
</dbReference>
<dbReference type="GO" id="GO:0042025">
    <property type="term" value="C:host cell nucleus"/>
    <property type="evidence" value="ECO:0007669"/>
    <property type="project" value="UniProtKB-SubCell"/>
</dbReference>
<dbReference type="GO" id="GO:0019033">
    <property type="term" value="C:viral tegument"/>
    <property type="evidence" value="ECO:0007669"/>
    <property type="project" value="UniProtKB-SubCell"/>
</dbReference>
<dbReference type="GO" id="GO:0005524">
    <property type="term" value="F:ATP binding"/>
    <property type="evidence" value="ECO:0007669"/>
    <property type="project" value="UniProtKB-KW"/>
</dbReference>
<dbReference type="GO" id="GO:0106310">
    <property type="term" value="F:protein serine kinase activity"/>
    <property type="evidence" value="ECO:0007669"/>
    <property type="project" value="RHEA"/>
</dbReference>
<dbReference type="GO" id="GO:0004674">
    <property type="term" value="F:protein serine/threonine kinase activity"/>
    <property type="evidence" value="ECO:0007669"/>
    <property type="project" value="UniProtKB-KW"/>
</dbReference>
<dbReference type="Gene3D" id="1.10.510.10">
    <property type="entry name" value="Transferase(Phosphotransferase) domain 1"/>
    <property type="match status" value="1"/>
</dbReference>
<dbReference type="InterPro" id="IPR011009">
    <property type="entry name" value="Kinase-like_dom_sf"/>
</dbReference>
<dbReference type="InterPro" id="IPR000719">
    <property type="entry name" value="Prot_kinase_dom"/>
</dbReference>
<dbReference type="InterPro" id="IPR008271">
    <property type="entry name" value="Ser/Thr_kinase_AS"/>
</dbReference>
<dbReference type="PANTHER" id="PTHR44167">
    <property type="entry name" value="OVARIAN-SPECIFIC SERINE/THREONINE-PROTEIN KINASE LOK-RELATED"/>
    <property type="match status" value="1"/>
</dbReference>
<dbReference type="PANTHER" id="PTHR44167:SF24">
    <property type="entry name" value="SERINE_THREONINE-PROTEIN KINASE CHK2"/>
    <property type="match status" value="1"/>
</dbReference>
<dbReference type="Pfam" id="PF00069">
    <property type="entry name" value="Pkinase"/>
    <property type="match status" value="1"/>
</dbReference>
<dbReference type="SMART" id="SM00220">
    <property type="entry name" value="S_TKc"/>
    <property type="match status" value="1"/>
</dbReference>
<dbReference type="SUPFAM" id="SSF56112">
    <property type="entry name" value="Protein kinase-like (PK-like)"/>
    <property type="match status" value="1"/>
</dbReference>
<dbReference type="PROSITE" id="PS50011">
    <property type="entry name" value="PROTEIN_KINASE_DOM"/>
    <property type="match status" value="1"/>
</dbReference>
<dbReference type="PROSITE" id="PS00108">
    <property type="entry name" value="PROTEIN_KINASE_ST"/>
    <property type="match status" value="1"/>
</dbReference>
<evidence type="ECO:0000250" key="1"/>
<evidence type="ECO:0000255" key="2">
    <source>
        <dbReference type="PROSITE-ProRule" id="PRU00159"/>
    </source>
</evidence>
<evidence type="ECO:0000255" key="3">
    <source>
        <dbReference type="PROSITE-ProRule" id="PRU10027"/>
    </source>
</evidence>
<evidence type="ECO:0000256" key="4">
    <source>
        <dbReference type="SAM" id="MobiDB-lite"/>
    </source>
</evidence>
<reference key="1">
    <citation type="journal article" date="2006" name="J. Virol.">
        <title>Psittacid herpesvirus 1 and infectious laryngotracheitis virus: Comparative genome sequence analysis of two avian alphaherpesviruses.</title>
        <authorList>
            <person name="Thureen D.R."/>
            <person name="Keeler C.L. Jr."/>
        </authorList>
    </citation>
    <scope>NUCLEOTIDE SEQUENCE [LARGE SCALE GENOMIC DNA]</scope>
</reference>
<sequence length="460" mass="50687">MATRGRPGAKQVADHSVSDGGEQRRIPQKPPGPERCDVCSAVSAAGAAADLIDVAPLEEDLTKEPQQIVVTIMSNDPAKVCLKVDPALHYRNVELEPYRFLGRGGYGSVFYSRRANVAVKALTHGASFRWELAVSLIVSSAARRQELSDIAKHFLQIYAFSSVEKIIVMEYIRHDLRTYLDEHCKPVTQSALDALVREFRGLAKALAFFHIECGLAHLDVKQNNILVNCDPRTGDPVRMVLADFSLAAINGNSFLNKCCMVCPGRPGVTGVHIIDTEDAVNSLPSNNILLFRMSRRPPEFLLDYCNGVGPRCGEVMGAMTTFAMDVFALGSVVHEVLLLCLSRVLGRDPFPHMTCTDEPMDHKTILSLLAYRLALTDYLSQSWSSAGFVNPAGTREGISSALQWECMRDMFLASAEAWTRTVRRKMNGARSPSMFADILDLSILLCHFDPDVRRTVSALA</sequence>
<gene>
    <name type="primary">UL13</name>
</gene>
<feature type="chain" id="PRO_0000406802" description="Serine/threonine-protein kinase UL13">
    <location>
        <begin position="1"/>
        <end position="460"/>
    </location>
</feature>
<feature type="domain" description="Protein kinase" evidence="2">
    <location>
        <begin position="95"/>
        <end position="460"/>
    </location>
</feature>
<feature type="region of interest" description="Disordered" evidence="4">
    <location>
        <begin position="1"/>
        <end position="37"/>
    </location>
</feature>
<feature type="compositionally biased region" description="Basic and acidic residues" evidence="4">
    <location>
        <begin position="12"/>
        <end position="25"/>
    </location>
</feature>
<feature type="active site" description="Proton acceptor" evidence="2 3">
    <location>
        <position position="219"/>
    </location>
</feature>
<feature type="binding site" evidence="2">
    <location>
        <begin position="101"/>
        <end position="109"/>
    </location>
    <ligand>
        <name>ATP</name>
        <dbReference type="ChEBI" id="CHEBI:30616"/>
    </ligand>
</feature>
<feature type="binding site" evidence="2">
    <location>
        <position position="120"/>
    </location>
    <ligand>
        <name>ATP</name>
        <dbReference type="ChEBI" id="CHEBI:30616"/>
    </ligand>
</feature>
<protein>
    <recommendedName>
        <fullName>Serine/threonine-protein kinase UL13</fullName>
        <ecNumber>2.7.11.1</ecNumber>
    </recommendedName>
</protein>
<comment type="function">
    <text evidence="1">Multifunctional serine/threonine kinase that plays a role in several processes including egress of virus particles from the nucleus, modulation of the actin cytoskeleton and regulation of viral and cellular gene expression. Regulates the nuclear localization of viral envelopment factors UL34 and UL31 homologs, by phosphorylating the US3 kinase homolog, indicating a role in nuclear egress. Disrupts host nuclear lamins, including LMNA and LMNB1. Phosphorylates the viral Fc receptor composed of glycoproteins E (gE) and I (gI). Phosphorylation of glycoprotein E (gE) by UL13 homolog alters its subcellular localization, from the host early endosome to the plasma membrane. Participates in the transcriptional regulation of cellular and viral mRNAs mainly by phosphorylating the viral transcriptional regulator ICP22 homolog (By similarity).</text>
</comment>
<comment type="catalytic activity">
    <reaction>
        <text>L-seryl-[protein] + ATP = O-phospho-L-seryl-[protein] + ADP + H(+)</text>
        <dbReference type="Rhea" id="RHEA:17989"/>
        <dbReference type="Rhea" id="RHEA-COMP:9863"/>
        <dbReference type="Rhea" id="RHEA-COMP:11604"/>
        <dbReference type="ChEBI" id="CHEBI:15378"/>
        <dbReference type="ChEBI" id="CHEBI:29999"/>
        <dbReference type="ChEBI" id="CHEBI:30616"/>
        <dbReference type="ChEBI" id="CHEBI:83421"/>
        <dbReference type="ChEBI" id="CHEBI:456216"/>
        <dbReference type="EC" id="2.7.11.1"/>
    </reaction>
</comment>
<comment type="catalytic activity">
    <reaction>
        <text>L-threonyl-[protein] + ATP = O-phospho-L-threonyl-[protein] + ADP + H(+)</text>
        <dbReference type="Rhea" id="RHEA:46608"/>
        <dbReference type="Rhea" id="RHEA-COMP:11060"/>
        <dbReference type="Rhea" id="RHEA-COMP:11605"/>
        <dbReference type="ChEBI" id="CHEBI:15378"/>
        <dbReference type="ChEBI" id="CHEBI:30013"/>
        <dbReference type="ChEBI" id="CHEBI:30616"/>
        <dbReference type="ChEBI" id="CHEBI:61977"/>
        <dbReference type="ChEBI" id="CHEBI:456216"/>
        <dbReference type="EC" id="2.7.11.1"/>
    </reaction>
</comment>
<comment type="subcellular location">
    <subcellularLocation>
        <location evidence="1">Virion tegument</location>
    </subcellularLocation>
    <subcellularLocation>
        <location evidence="1">Host nucleus</location>
    </subcellularLocation>
</comment>
<comment type="PTM">
    <text evidence="1">Autophosphorylated.</text>
</comment>
<comment type="miscellaneous">
    <text>Displays a substrate specificity similar to host CDC2.</text>
</comment>
<comment type="similarity">
    <text evidence="2">Belongs to the protein kinase superfamily. Ser/Thr protein kinase family.</text>
</comment>
<proteinExistence type="inferred from homology"/>
<accession>Q6UDH7</accession>
<organism>
    <name type="scientific">Psittacid herpesvirus 1 (isolate Amazon parrot/-/97-0001/1997)</name>
    <name type="common">PsHV-1</name>
    <name type="synonym">Pacheco's disease virus</name>
    <dbReference type="NCBI Taxonomy" id="670426"/>
    <lineage>
        <taxon>Viruses</taxon>
        <taxon>Duplodnaviria</taxon>
        <taxon>Heunggongvirae</taxon>
        <taxon>Peploviricota</taxon>
        <taxon>Herviviricetes</taxon>
        <taxon>Herpesvirales</taxon>
        <taxon>Orthoherpesviridae</taxon>
        <taxon>Alphaherpesvirinae</taxon>
        <taxon>Iltovirus</taxon>
        <taxon>Iltovirus psittacidalpha1</taxon>
        <taxon>Psittacid alphaherpesvirus 1</taxon>
    </lineage>
</organism>